<organism>
    <name type="scientific">Opitutus terrae (strain DSM 11246 / JCM 15787 / PB90-1)</name>
    <dbReference type="NCBI Taxonomy" id="452637"/>
    <lineage>
        <taxon>Bacteria</taxon>
        <taxon>Pseudomonadati</taxon>
        <taxon>Verrucomicrobiota</taxon>
        <taxon>Opitutia</taxon>
        <taxon>Opitutales</taxon>
        <taxon>Opitutaceae</taxon>
        <taxon>Opitutus</taxon>
    </lineage>
</organism>
<accession>B1ZU25</accession>
<feature type="chain" id="PRO_0000387016" description="Ribosomal RNA small subunit methyltransferase H">
    <location>
        <begin position="1"/>
        <end position="306"/>
    </location>
</feature>
<feature type="region of interest" description="Disordered" evidence="2">
    <location>
        <begin position="280"/>
        <end position="306"/>
    </location>
</feature>
<feature type="compositionally biased region" description="Basic residues" evidence="2">
    <location>
        <begin position="296"/>
        <end position="306"/>
    </location>
</feature>
<feature type="binding site" evidence="1">
    <location>
        <begin position="33"/>
        <end position="35"/>
    </location>
    <ligand>
        <name>S-adenosyl-L-methionine</name>
        <dbReference type="ChEBI" id="CHEBI:59789"/>
    </ligand>
</feature>
<feature type="binding site" evidence="1">
    <location>
        <position position="52"/>
    </location>
    <ligand>
        <name>S-adenosyl-L-methionine</name>
        <dbReference type="ChEBI" id="CHEBI:59789"/>
    </ligand>
</feature>
<feature type="binding site" evidence="1">
    <location>
        <position position="79"/>
    </location>
    <ligand>
        <name>S-adenosyl-L-methionine</name>
        <dbReference type="ChEBI" id="CHEBI:59789"/>
    </ligand>
</feature>
<feature type="binding site" evidence="1">
    <location>
        <position position="96"/>
    </location>
    <ligand>
        <name>S-adenosyl-L-methionine</name>
        <dbReference type="ChEBI" id="CHEBI:59789"/>
    </ligand>
</feature>
<feature type="binding site" evidence="1">
    <location>
        <position position="103"/>
    </location>
    <ligand>
        <name>S-adenosyl-L-methionine</name>
        <dbReference type="ChEBI" id="CHEBI:59789"/>
    </ligand>
</feature>
<evidence type="ECO:0000255" key="1">
    <source>
        <dbReference type="HAMAP-Rule" id="MF_01007"/>
    </source>
</evidence>
<evidence type="ECO:0000256" key="2">
    <source>
        <dbReference type="SAM" id="MobiDB-lite"/>
    </source>
</evidence>
<sequence length="306" mass="33675">MTPGHQPVLLREVLGFLAPRARGRYLDCTFGGGGHTRALLEAAAEVRVVALDRDPAAQPRAAALRETFGERFEFIDRDFGRLAELPHEGFDGVLFDFGVSSFQLDETERGFSFRHDAPADMRMDPRSGVPASQWLETATEEMLVRAIRDFGEEQHWRRIVRAIRDARGTGALARTASLAELIAAAIPACDRHAAKIHPATRAFQGVRIAVNDEIGAIERALPAAFAKLAPGGVLCVISFHSLEDRPAKQFFRRMCGQPESAADATPQDLRVKLADPLTRRPVTPADDELAANPRSRSAKLRALRRL</sequence>
<reference key="1">
    <citation type="journal article" date="2011" name="J. Bacteriol.">
        <title>Genome sequence of the verrucomicrobium Opitutus terrae PB90-1, an abundant inhabitant of rice paddy soil ecosystems.</title>
        <authorList>
            <person name="van Passel M.W."/>
            <person name="Kant R."/>
            <person name="Palva A."/>
            <person name="Copeland A."/>
            <person name="Lucas S."/>
            <person name="Lapidus A."/>
            <person name="Glavina del Rio T."/>
            <person name="Pitluck S."/>
            <person name="Goltsman E."/>
            <person name="Clum A."/>
            <person name="Sun H."/>
            <person name="Schmutz J."/>
            <person name="Larimer F.W."/>
            <person name="Land M.L."/>
            <person name="Hauser L."/>
            <person name="Kyrpides N."/>
            <person name="Mikhailova N."/>
            <person name="Richardson P.P."/>
            <person name="Janssen P.H."/>
            <person name="de Vos W.M."/>
            <person name="Smidt H."/>
        </authorList>
    </citation>
    <scope>NUCLEOTIDE SEQUENCE [LARGE SCALE GENOMIC DNA]</scope>
    <source>
        <strain>DSM 11246 / JCM 15787 / PB90-1</strain>
    </source>
</reference>
<gene>
    <name evidence="1" type="primary">rsmH</name>
    <name type="synonym">mraW</name>
    <name type="ordered locus">Oter_2626</name>
</gene>
<proteinExistence type="inferred from homology"/>
<dbReference type="EC" id="2.1.1.199" evidence="1"/>
<dbReference type="EMBL" id="CP001032">
    <property type="protein sequence ID" value="ACB75907.1"/>
    <property type="molecule type" value="Genomic_DNA"/>
</dbReference>
<dbReference type="RefSeq" id="WP_012375442.1">
    <property type="nucleotide sequence ID" value="NC_010571.1"/>
</dbReference>
<dbReference type="SMR" id="B1ZU25"/>
<dbReference type="STRING" id="452637.Oter_2626"/>
<dbReference type="KEGG" id="ote:Oter_2626"/>
<dbReference type="eggNOG" id="COG0275">
    <property type="taxonomic scope" value="Bacteria"/>
</dbReference>
<dbReference type="HOGENOM" id="CLU_038422_3_0_0"/>
<dbReference type="Proteomes" id="UP000007013">
    <property type="component" value="Chromosome"/>
</dbReference>
<dbReference type="GO" id="GO:0005737">
    <property type="term" value="C:cytoplasm"/>
    <property type="evidence" value="ECO:0007669"/>
    <property type="project" value="UniProtKB-SubCell"/>
</dbReference>
<dbReference type="GO" id="GO:0071424">
    <property type="term" value="F:rRNA (cytosine-N4-)-methyltransferase activity"/>
    <property type="evidence" value="ECO:0007669"/>
    <property type="project" value="UniProtKB-UniRule"/>
</dbReference>
<dbReference type="GO" id="GO:0070475">
    <property type="term" value="P:rRNA base methylation"/>
    <property type="evidence" value="ECO:0007669"/>
    <property type="project" value="UniProtKB-UniRule"/>
</dbReference>
<dbReference type="CDD" id="cd02440">
    <property type="entry name" value="AdoMet_MTases"/>
    <property type="match status" value="1"/>
</dbReference>
<dbReference type="Gene3D" id="1.10.150.170">
    <property type="entry name" value="Putative methyltransferase TM0872, insert domain"/>
    <property type="match status" value="1"/>
</dbReference>
<dbReference type="Gene3D" id="3.40.50.150">
    <property type="entry name" value="Vaccinia Virus protein VP39"/>
    <property type="match status" value="1"/>
</dbReference>
<dbReference type="HAMAP" id="MF_01007">
    <property type="entry name" value="16SrRNA_methyltr_H"/>
    <property type="match status" value="1"/>
</dbReference>
<dbReference type="InterPro" id="IPR002903">
    <property type="entry name" value="RsmH"/>
</dbReference>
<dbReference type="InterPro" id="IPR023397">
    <property type="entry name" value="SAM-dep_MeTrfase_MraW_recog"/>
</dbReference>
<dbReference type="InterPro" id="IPR029063">
    <property type="entry name" value="SAM-dependent_MTases_sf"/>
</dbReference>
<dbReference type="NCBIfam" id="TIGR00006">
    <property type="entry name" value="16S rRNA (cytosine(1402)-N(4))-methyltransferase RsmH"/>
    <property type="match status" value="1"/>
</dbReference>
<dbReference type="PANTHER" id="PTHR11265:SF0">
    <property type="entry name" value="12S RRNA N4-METHYLCYTIDINE METHYLTRANSFERASE"/>
    <property type="match status" value="1"/>
</dbReference>
<dbReference type="PANTHER" id="PTHR11265">
    <property type="entry name" value="S-ADENOSYL-METHYLTRANSFERASE MRAW"/>
    <property type="match status" value="1"/>
</dbReference>
<dbReference type="Pfam" id="PF01795">
    <property type="entry name" value="Methyltransf_5"/>
    <property type="match status" value="1"/>
</dbReference>
<dbReference type="PIRSF" id="PIRSF004486">
    <property type="entry name" value="MraW"/>
    <property type="match status" value="1"/>
</dbReference>
<dbReference type="SUPFAM" id="SSF81799">
    <property type="entry name" value="Putative methyltransferase TM0872, insert domain"/>
    <property type="match status" value="1"/>
</dbReference>
<dbReference type="SUPFAM" id="SSF53335">
    <property type="entry name" value="S-adenosyl-L-methionine-dependent methyltransferases"/>
    <property type="match status" value="1"/>
</dbReference>
<comment type="function">
    <text evidence="1">Specifically methylates the N4 position of cytidine in position 1402 (C1402) of 16S rRNA.</text>
</comment>
<comment type="catalytic activity">
    <reaction evidence="1">
        <text>cytidine(1402) in 16S rRNA + S-adenosyl-L-methionine = N(4)-methylcytidine(1402) in 16S rRNA + S-adenosyl-L-homocysteine + H(+)</text>
        <dbReference type="Rhea" id="RHEA:42928"/>
        <dbReference type="Rhea" id="RHEA-COMP:10286"/>
        <dbReference type="Rhea" id="RHEA-COMP:10287"/>
        <dbReference type="ChEBI" id="CHEBI:15378"/>
        <dbReference type="ChEBI" id="CHEBI:57856"/>
        <dbReference type="ChEBI" id="CHEBI:59789"/>
        <dbReference type="ChEBI" id="CHEBI:74506"/>
        <dbReference type="ChEBI" id="CHEBI:82748"/>
        <dbReference type="EC" id="2.1.1.199"/>
    </reaction>
</comment>
<comment type="subcellular location">
    <subcellularLocation>
        <location evidence="1">Cytoplasm</location>
    </subcellularLocation>
</comment>
<comment type="similarity">
    <text evidence="1">Belongs to the methyltransferase superfamily. RsmH family.</text>
</comment>
<keyword id="KW-0963">Cytoplasm</keyword>
<keyword id="KW-0489">Methyltransferase</keyword>
<keyword id="KW-1185">Reference proteome</keyword>
<keyword id="KW-0698">rRNA processing</keyword>
<keyword id="KW-0949">S-adenosyl-L-methionine</keyword>
<keyword id="KW-0808">Transferase</keyword>
<name>RSMH_OPITP</name>
<protein>
    <recommendedName>
        <fullName evidence="1">Ribosomal RNA small subunit methyltransferase H</fullName>
        <ecNumber evidence="1">2.1.1.199</ecNumber>
    </recommendedName>
    <alternativeName>
        <fullName evidence="1">16S rRNA m(4)C1402 methyltransferase</fullName>
    </alternativeName>
    <alternativeName>
        <fullName evidence="1">rRNA (cytosine-N(4)-)-methyltransferase RsmH</fullName>
    </alternativeName>
</protein>